<reference key="1">
    <citation type="journal article" date="2008" name="DNA Res.">
        <title>Comparative genome analysis of Lactobacillus reuteri and Lactobacillus fermentum reveal a genomic island for reuterin and cobalamin production.</title>
        <authorList>
            <person name="Morita H."/>
            <person name="Toh H."/>
            <person name="Fukuda S."/>
            <person name="Horikawa H."/>
            <person name="Oshima K."/>
            <person name="Suzuki T."/>
            <person name="Murakami M."/>
            <person name="Hisamatsu S."/>
            <person name="Kato Y."/>
            <person name="Takizawa T."/>
            <person name="Fukuoka H."/>
            <person name="Yoshimura T."/>
            <person name="Itoh K."/>
            <person name="O'Sullivan D.J."/>
            <person name="McKay L.L."/>
            <person name="Ohno H."/>
            <person name="Kikuchi J."/>
            <person name="Masaoka T."/>
            <person name="Hattori M."/>
        </authorList>
    </citation>
    <scope>NUCLEOTIDE SEQUENCE [LARGE SCALE GENOMIC DNA]</scope>
    <source>
        <strain>JCM 1112</strain>
    </source>
</reference>
<gene>
    <name evidence="1" type="primary">fhs</name>
    <name type="ordered locus">LAR_0125</name>
</gene>
<evidence type="ECO:0000255" key="1">
    <source>
        <dbReference type="HAMAP-Rule" id="MF_01543"/>
    </source>
</evidence>
<protein>
    <recommendedName>
        <fullName evidence="1">Formate--tetrahydrofolate ligase</fullName>
        <ecNumber evidence="1">6.3.4.3</ecNumber>
    </recommendedName>
    <alternativeName>
        <fullName evidence="1">Formyltetrahydrofolate synthetase</fullName>
        <shortName evidence="1">FHS</shortName>
        <shortName evidence="1">FTHFS</shortName>
    </alternativeName>
</protein>
<name>FTHS_LIMRJ</name>
<feature type="chain" id="PRO_1000196812" description="Formate--tetrahydrofolate ligase">
    <location>
        <begin position="1"/>
        <end position="553"/>
    </location>
</feature>
<feature type="binding site" evidence="1">
    <location>
        <begin position="62"/>
        <end position="69"/>
    </location>
    <ligand>
        <name>ATP</name>
        <dbReference type="ChEBI" id="CHEBI:30616"/>
    </ligand>
</feature>
<accession>B2G5A9</accession>
<comment type="catalytic activity">
    <reaction evidence="1">
        <text>(6S)-5,6,7,8-tetrahydrofolate + formate + ATP = (6R)-10-formyltetrahydrofolate + ADP + phosphate</text>
        <dbReference type="Rhea" id="RHEA:20221"/>
        <dbReference type="ChEBI" id="CHEBI:15740"/>
        <dbReference type="ChEBI" id="CHEBI:30616"/>
        <dbReference type="ChEBI" id="CHEBI:43474"/>
        <dbReference type="ChEBI" id="CHEBI:57453"/>
        <dbReference type="ChEBI" id="CHEBI:195366"/>
        <dbReference type="ChEBI" id="CHEBI:456216"/>
        <dbReference type="EC" id="6.3.4.3"/>
    </reaction>
</comment>
<comment type="pathway">
    <text evidence="1">One-carbon metabolism; tetrahydrofolate interconversion.</text>
</comment>
<comment type="similarity">
    <text evidence="1">Belongs to the formate--tetrahydrofolate ligase family.</text>
</comment>
<organism>
    <name type="scientific">Limosilactobacillus reuteri subsp. reuteri (strain JCM 1112)</name>
    <name type="common">Lactobacillus reuteri</name>
    <dbReference type="NCBI Taxonomy" id="557433"/>
    <lineage>
        <taxon>Bacteria</taxon>
        <taxon>Bacillati</taxon>
        <taxon>Bacillota</taxon>
        <taxon>Bacilli</taxon>
        <taxon>Lactobacillales</taxon>
        <taxon>Lactobacillaceae</taxon>
        <taxon>Limosilactobacillus</taxon>
    </lineage>
</organism>
<proteinExistence type="inferred from homology"/>
<sequence>MTDIEIADQATLEPITEIAEKLGLSEDEIEQYGKYKAKIDLNVKPLPDKKHKLILVTSINPTPAGEGKSTVLIGLGDALNQLNYQTTIAMREPSMGPVFGIKGGATGGGYSQVVPMEDINLNFTGDLHALTSANNTLAALIDNYIMRDNAMNLDPRRIIWKRVEDVNDRALRNVVTGLGGPMAGVPRETGFDITAASELMAILCLSTSLHDLKERISRIVVGYTYDKEPVTVGQLNFQDAITIILKDALKPNLVQTLDHTPTIVHGGPFANIAHGCNSVLATQTALNLSDYTVTEAGFGADLGGEKFLDIKQRVLGKHPDAIVIVATVRALEYNGGAKLADLNEENLDALKKGMANLNRHIKNMQLYGLPIVVAINHFVSDTDKEIQMIKDDCAKQNVEAILTDAWAKGGKGTHDLANKVVELADSPSEFTHIYDVQVDDLQTKLEKIAKQIYGAKEVSFSRKAQNQLKRFAKYGWNDLPVCIAKTQYSFTDDQKQLGAPTDFTFHIRELVPKIGAGFVVALAGNMMTMPGLPKEPAAVNMMIDDNGKITGLF</sequence>
<keyword id="KW-0067">ATP-binding</keyword>
<keyword id="KW-0436">Ligase</keyword>
<keyword id="KW-0547">Nucleotide-binding</keyword>
<keyword id="KW-0554">One-carbon metabolism</keyword>
<dbReference type="EC" id="6.3.4.3" evidence="1"/>
<dbReference type="EMBL" id="AP007281">
    <property type="protein sequence ID" value="BAG24641.1"/>
    <property type="molecule type" value="Genomic_DNA"/>
</dbReference>
<dbReference type="RefSeq" id="WP_003669710.1">
    <property type="nucleotide sequence ID" value="NC_010609.1"/>
</dbReference>
<dbReference type="SMR" id="B2G5A9"/>
<dbReference type="KEGG" id="lrf:LAR_0125"/>
<dbReference type="HOGENOM" id="CLU_003601_3_3_9"/>
<dbReference type="UniPathway" id="UPA00193"/>
<dbReference type="GO" id="GO:0005524">
    <property type="term" value="F:ATP binding"/>
    <property type="evidence" value="ECO:0007669"/>
    <property type="project" value="UniProtKB-UniRule"/>
</dbReference>
<dbReference type="GO" id="GO:0004329">
    <property type="term" value="F:formate-tetrahydrofolate ligase activity"/>
    <property type="evidence" value="ECO:0007669"/>
    <property type="project" value="UniProtKB-UniRule"/>
</dbReference>
<dbReference type="GO" id="GO:0035999">
    <property type="term" value="P:tetrahydrofolate interconversion"/>
    <property type="evidence" value="ECO:0007669"/>
    <property type="project" value="UniProtKB-UniRule"/>
</dbReference>
<dbReference type="CDD" id="cd00477">
    <property type="entry name" value="FTHFS"/>
    <property type="match status" value="1"/>
</dbReference>
<dbReference type="FunFam" id="3.30.1510.10:FF:000001">
    <property type="entry name" value="Formate--tetrahydrofolate ligase"/>
    <property type="match status" value="1"/>
</dbReference>
<dbReference type="FunFam" id="3.10.410.10:FF:000001">
    <property type="entry name" value="Putative formate--tetrahydrofolate ligase"/>
    <property type="match status" value="1"/>
</dbReference>
<dbReference type="Gene3D" id="3.30.1510.10">
    <property type="entry name" value="Domain 2, N(10)-formyltetrahydrofolate synthetase"/>
    <property type="match status" value="1"/>
</dbReference>
<dbReference type="Gene3D" id="3.10.410.10">
    <property type="entry name" value="Formyltetrahydrofolate synthetase, domain 3"/>
    <property type="match status" value="1"/>
</dbReference>
<dbReference type="Gene3D" id="3.40.50.300">
    <property type="entry name" value="P-loop containing nucleotide triphosphate hydrolases"/>
    <property type="match status" value="1"/>
</dbReference>
<dbReference type="HAMAP" id="MF_01543">
    <property type="entry name" value="FTHFS"/>
    <property type="match status" value="1"/>
</dbReference>
<dbReference type="InterPro" id="IPR000559">
    <property type="entry name" value="Formate_THF_ligase"/>
</dbReference>
<dbReference type="InterPro" id="IPR020628">
    <property type="entry name" value="Formate_THF_ligase_CS"/>
</dbReference>
<dbReference type="InterPro" id="IPR027417">
    <property type="entry name" value="P-loop_NTPase"/>
</dbReference>
<dbReference type="NCBIfam" id="NF010030">
    <property type="entry name" value="PRK13505.1"/>
    <property type="match status" value="1"/>
</dbReference>
<dbReference type="Pfam" id="PF01268">
    <property type="entry name" value="FTHFS"/>
    <property type="match status" value="1"/>
</dbReference>
<dbReference type="SUPFAM" id="SSF52540">
    <property type="entry name" value="P-loop containing nucleoside triphosphate hydrolases"/>
    <property type="match status" value="1"/>
</dbReference>
<dbReference type="PROSITE" id="PS00721">
    <property type="entry name" value="FTHFS_1"/>
    <property type="match status" value="1"/>
</dbReference>
<dbReference type="PROSITE" id="PS00722">
    <property type="entry name" value="FTHFS_2"/>
    <property type="match status" value="1"/>
</dbReference>